<accession>Q07XN2</accession>
<organism>
    <name type="scientific">Shewanella frigidimarina (strain NCIMB 400)</name>
    <dbReference type="NCBI Taxonomy" id="318167"/>
    <lineage>
        <taxon>Bacteria</taxon>
        <taxon>Pseudomonadati</taxon>
        <taxon>Pseudomonadota</taxon>
        <taxon>Gammaproteobacteria</taxon>
        <taxon>Alteromonadales</taxon>
        <taxon>Shewanellaceae</taxon>
        <taxon>Shewanella</taxon>
    </lineage>
</organism>
<keyword id="KW-0997">Cell inner membrane</keyword>
<keyword id="KW-1003">Cell membrane</keyword>
<keyword id="KW-0460">Magnesium</keyword>
<keyword id="KW-0472">Membrane</keyword>
<keyword id="KW-1185">Reference proteome</keyword>
<keyword id="KW-0808">Transferase</keyword>
<keyword id="KW-0812">Transmembrane</keyword>
<keyword id="KW-1133">Transmembrane helix</keyword>
<keyword id="KW-0831">Ubiquinone biosynthesis</keyword>
<reference key="1">
    <citation type="submission" date="2006-08" db="EMBL/GenBank/DDBJ databases">
        <title>Complete sequence of Shewanella frigidimarina NCIMB 400.</title>
        <authorList>
            <consortium name="US DOE Joint Genome Institute"/>
            <person name="Copeland A."/>
            <person name="Lucas S."/>
            <person name="Lapidus A."/>
            <person name="Barry K."/>
            <person name="Detter J.C."/>
            <person name="Glavina del Rio T."/>
            <person name="Hammon N."/>
            <person name="Israni S."/>
            <person name="Dalin E."/>
            <person name="Tice H."/>
            <person name="Pitluck S."/>
            <person name="Fredrickson J.K."/>
            <person name="Kolker E."/>
            <person name="McCuel L.A."/>
            <person name="DiChristina T."/>
            <person name="Nealson K.H."/>
            <person name="Newman D."/>
            <person name="Tiedje J.M."/>
            <person name="Zhou J."/>
            <person name="Romine M.F."/>
            <person name="Culley D.E."/>
            <person name="Serres M."/>
            <person name="Chertkov O."/>
            <person name="Brettin T."/>
            <person name="Bruce D."/>
            <person name="Han C."/>
            <person name="Tapia R."/>
            <person name="Gilna P."/>
            <person name="Schmutz J."/>
            <person name="Larimer F."/>
            <person name="Land M."/>
            <person name="Hauser L."/>
            <person name="Kyrpides N."/>
            <person name="Mikhailova N."/>
            <person name="Richardson P."/>
        </authorList>
    </citation>
    <scope>NUCLEOTIDE SEQUENCE [LARGE SCALE GENOMIC DNA]</scope>
    <source>
        <strain>NCIMB 400</strain>
    </source>
</reference>
<dbReference type="EC" id="2.5.1.39" evidence="1"/>
<dbReference type="EMBL" id="CP000447">
    <property type="protein sequence ID" value="ABI73232.1"/>
    <property type="molecule type" value="Genomic_DNA"/>
</dbReference>
<dbReference type="RefSeq" id="WP_011638833.1">
    <property type="nucleotide sequence ID" value="NC_008345.1"/>
</dbReference>
<dbReference type="SMR" id="Q07XN2"/>
<dbReference type="STRING" id="318167.Sfri_3396"/>
<dbReference type="KEGG" id="sfr:Sfri_3396"/>
<dbReference type="eggNOG" id="COG0382">
    <property type="taxonomic scope" value="Bacteria"/>
</dbReference>
<dbReference type="HOGENOM" id="CLU_034879_1_0_6"/>
<dbReference type="OrthoDB" id="9782418at2"/>
<dbReference type="UniPathway" id="UPA00232"/>
<dbReference type="Proteomes" id="UP000000684">
    <property type="component" value="Chromosome"/>
</dbReference>
<dbReference type="GO" id="GO:0005886">
    <property type="term" value="C:plasma membrane"/>
    <property type="evidence" value="ECO:0007669"/>
    <property type="project" value="UniProtKB-SubCell"/>
</dbReference>
<dbReference type="GO" id="GO:0008412">
    <property type="term" value="F:4-hydroxybenzoate polyprenyltransferase activity"/>
    <property type="evidence" value="ECO:0007669"/>
    <property type="project" value="UniProtKB-UniRule"/>
</dbReference>
<dbReference type="GO" id="GO:0006744">
    <property type="term" value="P:ubiquinone biosynthetic process"/>
    <property type="evidence" value="ECO:0007669"/>
    <property type="project" value="UniProtKB-UniRule"/>
</dbReference>
<dbReference type="CDD" id="cd13959">
    <property type="entry name" value="PT_UbiA_COQ2"/>
    <property type="match status" value="1"/>
</dbReference>
<dbReference type="FunFam" id="1.10.357.140:FF:000002">
    <property type="entry name" value="4-hydroxybenzoate octaprenyltransferase"/>
    <property type="match status" value="1"/>
</dbReference>
<dbReference type="FunFam" id="1.20.120.1780:FF:000001">
    <property type="entry name" value="4-hydroxybenzoate octaprenyltransferase"/>
    <property type="match status" value="1"/>
</dbReference>
<dbReference type="Gene3D" id="1.10.357.140">
    <property type="entry name" value="UbiA prenyltransferase"/>
    <property type="match status" value="1"/>
</dbReference>
<dbReference type="Gene3D" id="1.20.120.1780">
    <property type="entry name" value="UbiA prenyltransferase"/>
    <property type="match status" value="1"/>
</dbReference>
<dbReference type="HAMAP" id="MF_01635">
    <property type="entry name" value="UbiA"/>
    <property type="match status" value="1"/>
</dbReference>
<dbReference type="InterPro" id="IPR006370">
    <property type="entry name" value="HB_polyprenyltransferase-like"/>
</dbReference>
<dbReference type="InterPro" id="IPR039653">
    <property type="entry name" value="Prenyltransferase"/>
</dbReference>
<dbReference type="InterPro" id="IPR000537">
    <property type="entry name" value="UbiA_prenyltransferase"/>
</dbReference>
<dbReference type="InterPro" id="IPR030470">
    <property type="entry name" value="UbiA_prenylTrfase_CS"/>
</dbReference>
<dbReference type="InterPro" id="IPR044878">
    <property type="entry name" value="UbiA_sf"/>
</dbReference>
<dbReference type="NCBIfam" id="TIGR01474">
    <property type="entry name" value="ubiA_proteo"/>
    <property type="match status" value="1"/>
</dbReference>
<dbReference type="PANTHER" id="PTHR11048:SF28">
    <property type="entry name" value="4-HYDROXYBENZOATE POLYPRENYLTRANSFERASE, MITOCHONDRIAL"/>
    <property type="match status" value="1"/>
</dbReference>
<dbReference type="PANTHER" id="PTHR11048">
    <property type="entry name" value="PRENYLTRANSFERASES"/>
    <property type="match status" value="1"/>
</dbReference>
<dbReference type="Pfam" id="PF01040">
    <property type="entry name" value="UbiA"/>
    <property type="match status" value="1"/>
</dbReference>
<dbReference type="PROSITE" id="PS00943">
    <property type="entry name" value="UBIA"/>
    <property type="match status" value="1"/>
</dbReference>
<sequence length="286" mass="32087">MSLQDKLRAYARLMRIDRPIGTLLLLWPCLMALVLAAQGLPDIKVLLIFIVGVVIMRANGCIINDFADRKLDAHVERTSMRPLVSGEVSVKEALTLFTLLGLAAFCLVLWLNPLVVQLSVVGIILTVMYPFMKRVTNMPQMFLGIVWSWSIPMAYAAQLGEVPVEAWWLFMANWCWTVAYDTMYAIVDRDDDLKVGIKSTAILFGRFDRQIIGVFQLAALGCFVMAGLVADRGVIYGLGIISFIGFAVYQQRLIFGRERAPCFKAFLNNNWAGMVLFIALALDYMI</sequence>
<comment type="function">
    <text evidence="1">Catalyzes the prenylation of para-hydroxybenzoate (PHB) with an all-trans polyprenyl group. Mediates the second step in the final reaction sequence of ubiquinone-8 (UQ-8) biosynthesis, which is the condensation of the polyisoprenoid side chain with PHB, generating the first membrane-bound Q intermediate 3-octaprenyl-4-hydroxybenzoate.</text>
</comment>
<comment type="catalytic activity">
    <reaction evidence="1">
        <text>all-trans-octaprenyl diphosphate + 4-hydroxybenzoate = 4-hydroxy-3-(all-trans-octaprenyl)benzoate + diphosphate</text>
        <dbReference type="Rhea" id="RHEA:27782"/>
        <dbReference type="ChEBI" id="CHEBI:1617"/>
        <dbReference type="ChEBI" id="CHEBI:17879"/>
        <dbReference type="ChEBI" id="CHEBI:33019"/>
        <dbReference type="ChEBI" id="CHEBI:57711"/>
        <dbReference type="EC" id="2.5.1.39"/>
    </reaction>
</comment>
<comment type="cofactor">
    <cofactor evidence="1">
        <name>Mg(2+)</name>
        <dbReference type="ChEBI" id="CHEBI:18420"/>
    </cofactor>
</comment>
<comment type="pathway">
    <text evidence="1">Cofactor biosynthesis; ubiquinone biosynthesis.</text>
</comment>
<comment type="subcellular location">
    <subcellularLocation>
        <location evidence="1">Cell inner membrane</location>
        <topology evidence="1">Multi-pass membrane protein</topology>
    </subcellularLocation>
</comment>
<comment type="similarity">
    <text evidence="1">Belongs to the UbiA prenyltransferase family.</text>
</comment>
<name>UBIA_SHEFN</name>
<proteinExistence type="inferred from homology"/>
<evidence type="ECO:0000255" key="1">
    <source>
        <dbReference type="HAMAP-Rule" id="MF_01635"/>
    </source>
</evidence>
<feature type="chain" id="PRO_0000262838" description="4-hydroxybenzoate octaprenyltransferase">
    <location>
        <begin position="1"/>
        <end position="286"/>
    </location>
</feature>
<feature type="transmembrane region" description="Helical" evidence="1">
    <location>
        <begin position="20"/>
        <end position="40"/>
    </location>
</feature>
<feature type="transmembrane region" description="Helical" evidence="1">
    <location>
        <begin position="43"/>
        <end position="63"/>
    </location>
</feature>
<feature type="transmembrane region" description="Helical" evidence="1">
    <location>
        <begin position="96"/>
        <end position="116"/>
    </location>
</feature>
<feature type="transmembrane region" description="Helical" evidence="1">
    <location>
        <begin position="142"/>
        <end position="162"/>
    </location>
</feature>
<feature type="transmembrane region" description="Helical" evidence="1">
    <location>
        <begin position="167"/>
        <end position="187"/>
    </location>
</feature>
<feature type="transmembrane region" description="Helical" evidence="1">
    <location>
        <begin position="210"/>
        <end position="230"/>
    </location>
</feature>
<feature type="transmembrane region" description="Helical" evidence="1">
    <location>
        <begin position="235"/>
        <end position="255"/>
    </location>
</feature>
<feature type="transmembrane region" description="Helical" evidence="1">
    <location>
        <begin position="266"/>
        <end position="286"/>
    </location>
</feature>
<protein>
    <recommendedName>
        <fullName evidence="1">4-hydroxybenzoate octaprenyltransferase</fullName>
        <ecNumber evidence="1">2.5.1.39</ecNumber>
    </recommendedName>
    <alternativeName>
        <fullName evidence="1">4-HB polyprenyltransferase</fullName>
    </alternativeName>
</protein>
<gene>
    <name evidence="1" type="primary">ubiA</name>
    <name type="ordered locus">Sfri_3396</name>
</gene>